<comment type="function">
    <text evidence="1">Catalyzes the conversion of 4-hydroxy-tetrahydrodipicolinate (HTPA) to tetrahydrodipicolinate.</text>
</comment>
<comment type="catalytic activity">
    <reaction evidence="1">
        <text>(S)-2,3,4,5-tetrahydrodipicolinate + NAD(+) + H2O = (2S,4S)-4-hydroxy-2,3,4,5-tetrahydrodipicolinate + NADH + H(+)</text>
        <dbReference type="Rhea" id="RHEA:35323"/>
        <dbReference type="ChEBI" id="CHEBI:15377"/>
        <dbReference type="ChEBI" id="CHEBI:15378"/>
        <dbReference type="ChEBI" id="CHEBI:16845"/>
        <dbReference type="ChEBI" id="CHEBI:57540"/>
        <dbReference type="ChEBI" id="CHEBI:57945"/>
        <dbReference type="ChEBI" id="CHEBI:67139"/>
        <dbReference type="EC" id="1.17.1.8"/>
    </reaction>
</comment>
<comment type="catalytic activity">
    <reaction evidence="1">
        <text>(S)-2,3,4,5-tetrahydrodipicolinate + NADP(+) + H2O = (2S,4S)-4-hydroxy-2,3,4,5-tetrahydrodipicolinate + NADPH + H(+)</text>
        <dbReference type="Rhea" id="RHEA:35331"/>
        <dbReference type="ChEBI" id="CHEBI:15377"/>
        <dbReference type="ChEBI" id="CHEBI:15378"/>
        <dbReference type="ChEBI" id="CHEBI:16845"/>
        <dbReference type="ChEBI" id="CHEBI:57783"/>
        <dbReference type="ChEBI" id="CHEBI:58349"/>
        <dbReference type="ChEBI" id="CHEBI:67139"/>
        <dbReference type="EC" id="1.17.1.8"/>
    </reaction>
</comment>
<comment type="pathway">
    <text evidence="1">Amino-acid biosynthesis; L-lysine biosynthesis via DAP pathway; (S)-tetrahydrodipicolinate from L-aspartate: step 4/4.</text>
</comment>
<comment type="subcellular location">
    <subcellularLocation>
        <location evidence="1">Cytoplasm</location>
    </subcellularLocation>
</comment>
<comment type="similarity">
    <text evidence="1">Belongs to the DapB family.</text>
</comment>
<comment type="caution">
    <text evidence="2">Was originally thought to be a dihydrodipicolinate reductase (DHDPR), catalyzing the conversion of dihydrodipicolinate to tetrahydrodipicolinate. However, it was shown in E.coli that the substrate of the enzymatic reaction is not dihydrodipicolinate (DHDP) but in fact (2S,4S)-4-hydroxy-2,3,4,5-tetrahydrodipicolinic acid (HTPA), the product released by the DapA-catalyzed reaction.</text>
</comment>
<evidence type="ECO:0000255" key="1">
    <source>
        <dbReference type="HAMAP-Rule" id="MF_00102"/>
    </source>
</evidence>
<evidence type="ECO:0000305" key="2"/>
<feature type="chain" id="PRO_0000228376" description="4-hydroxy-tetrahydrodipicolinate reductase">
    <location>
        <begin position="1"/>
        <end position="267"/>
    </location>
</feature>
<feature type="active site" description="Proton donor/acceptor" evidence="1">
    <location>
        <position position="155"/>
    </location>
</feature>
<feature type="active site" description="Proton donor" evidence="1">
    <location>
        <position position="159"/>
    </location>
</feature>
<feature type="binding site" evidence="1">
    <location>
        <begin position="8"/>
        <end position="13"/>
    </location>
    <ligand>
        <name>NAD(+)</name>
        <dbReference type="ChEBI" id="CHEBI:57540"/>
    </ligand>
</feature>
<feature type="binding site" evidence="1">
    <location>
        <position position="34"/>
    </location>
    <ligand>
        <name>NAD(+)</name>
        <dbReference type="ChEBI" id="CHEBI:57540"/>
    </ligand>
</feature>
<feature type="binding site" evidence="1">
    <location>
        <position position="35"/>
    </location>
    <ligand>
        <name>NADP(+)</name>
        <dbReference type="ChEBI" id="CHEBI:58349"/>
    </ligand>
</feature>
<feature type="binding site" evidence="1">
    <location>
        <begin position="98"/>
        <end position="100"/>
    </location>
    <ligand>
        <name>NAD(+)</name>
        <dbReference type="ChEBI" id="CHEBI:57540"/>
    </ligand>
</feature>
<feature type="binding site" evidence="1">
    <location>
        <begin position="122"/>
        <end position="125"/>
    </location>
    <ligand>
        <name>NAD(+)</name>
        <dbReference type="ChEBI" id="CHEBI:57540"/>
    </ligand>
</feature>
<feature type="binding site" evidence="1">
    <location>
        <position position="156"/>
    </location>
    <ligand>
        <name>(S)-2,3,4,5-tetrahydrodipicolinate</name>
        <dbReference type="ChEBI" id="CHEBI:16845"/>
    </ligand>
</feature>
<feature type="binding site" evidence="1">
    <location>
        <begin position="165"/>
        <end position="166"/>
    </location>
    <ligand>
        <name>(S)-2,3,4,5-tetrahydrodipicolinate</name>
        <dbReference type="ChEBI" id="CHEBI:16845"/>
    </ligand>
</feature>
<name>DAPB_PSE14</name>
<dbReference type="EC" id="1.17.1.8" evidence="1"/>
<dbReference type="EMBL" id="CP000058">
    <property type="protein sequence ID" value="AAZ33901.1"/>
    <property type="molecule type" value="Genomic_DNA"/>
</dbReference>
<dbReference type="RefSeq" id="WP_011169454.1">
    <property type="nucleotide sequence ID" value="NC_005773.3"/>
</dbReference>
<dbReference type="SMR" id="Q48E64"/>
<dbReference type="KEGG" id="psp:PSPPH_4204"/>
<dbReference type="eggNOG" id="COG0289">
    <property type="taxonomic scope" value="Bacteria"/>
</dbReference>
<dbReference type="HOGENOM" id="CLU_047479_2_1_6"/>
<dbReference type="UniPathway" id="UPA00034">
    <property type="reaction ID" value="UER00018"/>
</dbReference>
<dbReference type="Proteomes" id="UP000000551">
    <property type="component" value="Chromosome"/>
</dbReference>
<dbReference type="GO" id="GO:0005829">
    <property type="term" value="C:cytosol"/>
    <property type="evidence" value="ECO:0007669"/>
    <property type="project" value="TreeGrafter"/>
</dbReference>
<dbReference type="GO" id="GO:0008839">
    <property type="term" value="F:4-hydroxy-tetrahydrodipicolinate reductase"/>
    <property type="evidence" value="ECO:0007669"/>
    <property type="project" value="UniProtKB-EC"/>
</dbReference>
<dbReference type="GO" id="GO:0051287">
    <property type="term" value="F:NAD binding"/>
    <property type="evidence" value="ECO:0007669"/>
    <property type="project" value="UniProtKB-UniRule"/>
</dbReference>
<dbReference type="GO" id="GO:0050661">
    <property type="term" value="F:NADP binding"/>
    <property type="evidence" value="ECO:0007669"/>
    <property type="project" value="UniProtKB-UniRule"/>
</dbReference>
<dbReference type="GO" id="GO:0016726">
    <property type="term" value="F:oxidoreductase activity, acting on CH or CH2 groups, NAD or NADP as acceptor"/>
    <property type="evidence" value="ECO:0007669"/>
    <property type="project" value="UniProtKB-UniRule"/>
</dbReference>
<dbReference type="GO" id="GO:0019877">
    <property type="term" value="P:diaminopimelate biosynthetic process"/>
    <property type="evidence" value="ECO:0007669"/>
    <property type="project" value="UniProtKB-UniRule"/>
</dbReference>
<dbReference type="GO" id="GO:0009089">
    <property type="term" value="P:lysine biosynthetic process via diaminopimelate"/>
    <property type="evidence" value="ECO:0007669"/>
    <property type="project" value="UniProtKB-UniRule"/>
</dbReference>
<dbReference type="CDD" id="cd02274">
    <property type="entry name" value="DHDPR_N"/>
    <property type="match status" value="1"/>
</dbReference>
<dbReference type="FunFam" id="3.30.360.10:FF:000004">
    <property type="entry name" value="4-hydroxy-tetrahydrodipicolinate reductase"/>
    <property type="match status" value="1"/>
</dbReference>
<dbReference type="FunFam" id="3.40.50.720:FF:000048">
    <property type="entry name" value="4-hydroxy-tetrahydrodipicolinate reductase"/>
    <property type="match status" value="1"/>
</dbReference>
<dbReference type="Gene3D" id="3.30.360.10">
    <property type="entry name" value="Dihydrodipicolinate Reductase, domain 2"/>
    <property type="match status" value="1"/>
</dbReference>
<dbReference type="Gene3D" id="3.40.50.720">
    <property type="entry name" value="NAD(P)-binding Rossmann-like Domain"/>
    <property type="match status" value="1"/>
</dbReference>
<dbReference type="HAMAP" id="MF_00102">
    <property type="entry name" value="DapB"/>
    <property type="match status" value="1"/>
</dbReference>
<dbReference type="InterPro" id="IPR022663">
    <property type="entry name" value="DapB_C"/>
</dbReference>
<dbReference type="InterPro" id="IPR000846">
    <property type="entry name" value="DapB_N"/>
</dbReference>
<dbReference type="InterPro" id="IPR022664">
    <property type="entry name" value="DapB_N_CS"/>
</dbReference>
<dbReference type="InterPro" id="IPR023940">
    <property type="entry name" value="DHDPR_bac"/>
</dbReference>
<dbReference type="InterPro" id="IPR036291">
    <property type="entry name" value="NAD(P)-bd_dom_sf"/>
</dbReference>
<dbReference type="NCBIfam" id="TIGR00036">
    <property type="entry name" value="dapB"/>
    <property type="match status" value="1"/>
</dbReference>
<dbReference type="PANTHER" id="PTHR20836:SF0">
    <property type="entry name" value="4-HYDROXY-TETRAHYDRODIPICOLINATE REDUCTASE 1, CHLOROPLASTIC-RELATED"/>
    <property type="match status" value="1"/>
</dbReference>
<dbReference type="PANTHER" id="PTHR20836">
    <property type="entry name" value="DIHYDRODIPICOLINATE REDUCTASE"/>
    <property type="match status" value="1"/>
</dbReference>
<dbReference type="Pfam" id="PF05173">
    <property type="entry name" value="DapB_C"/>
    <property type="match status" value="1"/>
</dbReference>
<dbReference type="Pfam" id="PF01113">
    <property type="entry name" value="DapB_N"/>
    <property type="match status" value="1"/>
</dbReference>
<dbReference type="PIRSF" id="PIRSF000161">
    <property type="entry name" value="DHPR"/>
    <property type="match status" value="1"/>
</dbReference>
<dbReference type="SUPFAM" id="SSF55347">
    <property type="entry name" value="Glyceraldehyde-3-phosphate dehydrogenase-like, C-terminal domain"/>
    <property type="match status" value="1"/>
</dbReference>
<dbReference type="SUPFAM" id="SSF51735">
    <property type="entry name" value="NAD(P)-binding Rossmann-fold domains"/>
    <property type="match status" value="1"/>
</dbReference>
<dbReference type="PROSITE" id="PS01298">
    <property type="entry name" value="DAPB"/>
    <property type="match status" value="1"/>
</dbReference>
<gene>
    <name evidence="1" type="primary">dapB</name>
    <name type="ordered locus">PSPPH_4204</name>
</gene>
<reference key="1">
    <citation type="journal article" date="2005" name="J. Bacteriol.">
        <title>Whole-genome sequence analysis of Pseudomonas syringae pv. phaseolicola 1448A reveals divergence among pathovars in genes involved in virulence and transposition.</title>
        <authorList>
            <person name="Joardar V."/>
            <person name="Lindeberg M."/>
            <person name="Jackson R.W."/>
            <person name="Selengut J."/>
            <person name="Dodson R."/>
            <person name="Brinkac L.M."/>
            <person name="Daugherty S.C."/>
            <person name="DeBoy R.T."/>
            <person name="Durkin A.S."/>
            <person name="Gwinn Giglio M."/>
            <person name="Madupu R."/>
            <person name="Nelson W.C."/>
            <person name="Rosovitz M.J."/>
            <person name="Sullivan S.A."/>
            <person name="Crabtree J."/>
            <person name="Creasy T."/>
            <person name="Davidsen T.M."/>
            <person name="Haft D.H."/>
            <person name="Zafar N."/>
            <person name="Zhou L."/>
            <person name="Halpin R."/>
            <person name="Holley T."/>
            <person name="Khouri H.M."/>
            <person name="Feldblyum T.V."/>
            <person name="White O."/>
            <person name="Fraser C.M."/>
            <person name="Chatterjee A.K."/>
            <person name="Cartinhour S."/>
            <person name="Schneider D."/>
            <person name="Mansfield J.W."/>
            <person name="Collmer A."/>
            <person name="Buell R."/>
        </authorList>
    </citation>
    <scope>NUCLEOTIDE SEQUENCE [LARGE SCALE GENOMIC DNA]</scope>
    <source>
        <strain>1448A / Race 6</strain>
    </source>
</reference>
<protein>
    <recommendedName>
        <fullName evidence="1">4-hydroxy-tetrahydrodipicolinate reductase</fullName>
        <shortName evidence="1">HTPA reductase</shortName>
        <ecNumber evidence="1">1.17.1.8</ecNumber>
    </recommendedName>
</protein>
<accession>Q48E64</accession>
<proteinExistence type="inferred from homology"/>
<organism>
    <name type="scientific">Pseudomonas savastanoi pv. phaseolicola (strain 1448A / Race 6)</name>
    <name type="common">Pseudomonas syringae pv. phaseolicola (strain 1448A / Race 6)</name>
    <dbReference type="NCBI Taxonomy" id="264730"/>
    <lineage>
        <taxon>Bacteria</taxon>
        <taxon>Pseudomonadati</taxon>
        <taxon>Pseudomonadota</taxon>
        <taxon>Gammaproteobacteria</taxon>
        <taxon>Pseudomonadales</taxon>
        <taxon>Pseudomonadaceae</taxon>
        <taxon>Pseudomonas</taxon>
    </lineage>
</organism>
<keyword id="KW-0028">Amino-acid biosynthesis</keyword>
<keyword id="KW-0963">Cytoplasm</keyword>
<keyword id="KW-0220">Diaminopimelate biosynthesis</keyword>
<keyword id="KW-0457">Lysine biosynthesis</keyword>
<keyword id="KW-0520">NAD</keyword>
<keyword id="KW-0521">NADP</keyword>
<keyword id="KW-0560">Oxidoreductase</keyword>
<sequence>MRRIAVVGAAGRMGKTLIEAVQQAPGAGLTAAIDRPDSTLVGADAGELAALGRIGVPLSGDLAKVADEFDVLIDFTHPSVTLKNLAFCRKAGKAMIIGTTGFSAEEKQRLVEAGKDIPIVFAANFSIGVNLCLKLLDTAARVLGDEVDIEITEAHHRHKVDAPSGTALRMGEVVASALGRDLEKVAVYGREGQTGARDCQTIGFATIRAGDVVGDHTVLFAADGERVEITHKASSRMTFAKGAVRAAMWLDGKAPGLYDMQDVLGLH</sequence>